<sequence length="262" mass="28703">MRTSRLKKPIVLLTIALLSSVFFFAFFFLNKSDVSSTSALRNRDSMARTFILWLHGLGDSGPANEPIKTLFRSQEFRNTKWLFPSAPPNPVSCNYGAVMPSWFDIPELPLTAGSPKDESSLLKAVKNVHAIIDKEIAGGINPENVYICGFSQGGALTLASVLLYPKTIGGGAVFSGWIPFNSSITNQFTEDAKKTPILWSHGIDDKTVLFEAGQAALPFLQQAGVTCEFKAYPGLGHSISNEELQYLESWLKQRMQSSSSSS</sequence>
<reference key="1">
    <citation type="journal article" date="1999" name="Nature">
        <title>Sequence and analysis of chromosome 4 of the plant Arabidopsis thaliana.</title>
        <authorList>
            <person name="Mayer K.F.X."/>
            <person name="Schueller C."/>
            <person name="Wambutt R."/>
            <person name="Murphy G."/>
            <person name="Volckaert G."/>
            <person name="Pohl T."/>
            <person name="Duesterhoeft A."/>
            <person name="Stiekema W."/>
            <person name="Entian K.-D."/>
            <person name="Terryn N."/>
            <person name="Harris B."/>
            <person name="Ansorge W."/>
            <person name="Brandt P."/>
            <person name="Grivell L.A."/>
            <person name="Rieger M."/>
            <person name="Weichselgartner M."/>
            <person name="de Simone V."/>
            <person name="Obermaier B."/>
            <person name="Mache R."/>
            <person name="Mueller M."/>
            <person name="Kreis M."/>
            <person name="Delseny M."/>
            <person name="Puigdomenech P."/>
            <person name="Watson M."/>
            <person name="Schmidtheini T."/>
            <person name="Reichert B."/>
            <person name="Portetelle D."/>
            <person name="Perez-Alonso M."/>
            <person name="Boutry M."/>
            <person name="Bancroft I."/>
            <person name="Vos P."/>
            <person name="Hoheisel J."/>
            <person name="Zimmermann W."/>
            <person name="Wedler H."/>
            <person name="Ridley P."/>
            <person name="Langham S.-A."/>
            <person name="McCullagh B."/>
            <person name="Bilham L."/>
            <person name="Robben J."/>
            <person name="van der Schueren J."/>
            <person name="Grymonprez B."/>
            <person name="Chuang Y.-J."/>
            <person name="Vandenbussche F."/>
            <person name="Braeken M."/>
            <person name="Weltjens I."/>
            <person name="Voet M."/>
            <person name="Bastiaens I."/>
            <person name="Aert R."/>
            <person name="Defoor E."/>
            <person name="Weitzenegger T."/>
            <person name="Bothe G."/>
            <person name="Ramsperger U."/>
            <person name="Hilbert H."/>
            <person name="Braun M."/>
            <person name="Holzer E."/>
            <person name="Brandt A."/>
            <person name="Peters S."/>
            <person name="van Staveren M."/>
            <person name="Dirkse W."/>
            <person name="Mooijman P."/>
            <person name="Klein Lankhorst R."/>
            <person name="Rose M."/>
            <person name="Hauf J."/>
            <person name="Koetter P."/>
            <person name="Berneiser S."/>
            <person name="Hempel S."/>
            <person name="Feldpausch M."/>
            <person name="Lamberth S."/>
            <person name="Van den Daele H."/>
            <person name="De Keyser A."/>
            <person name="Buysshaert C."/>
            <person name="Gielen J."/>
            <person name="Villarroel R."/>
            <person name="De Clercq R."/>
            <person name="van Montagu M."/>
            <person name="Rogers J."/>
            <person name="Cronin A."/>
            <person name="Quail M.A."/>
            <person name="Bray-Allen S."/>
            <person name="Clark L."/>
            <person name="Doggett J."/>
            <person name="Hall S."/>
            <person name="Kay M."/>
            <person name="Lennard N."/>
            <person name="McLay K."/>
            <person name="Mayes R."/>
            <person name="Pettett A."/>
            <person name="Rajandream M.A."/>
            <person name="Lyne M."/>
            <person name="Benes V."/>
            <person name="Rechmann S."/>
            <person name="Borkova D."/>
            <person name="Bloecker H."/>
            <person name="Scharfe M."/>
            <person name="Grimm M."/>
            <person name="Loehnert T.-H."/>
            <person name="Dose S."/>
            <person name="de Haan M."/>
            <person name="Maarse A.C."/>
            <person name="Schaefer M."/>
            <person name="Mueller-Auer S."/>
            <person name="Gabel C."/>
            <person name="Fuchs M."/>
            <person name="Fartmann B."/>
            <person name="Granderath K."/>
            <person name="Dauner D."/>
            <person name="Herzl A."/>
            <person name="Neumann S."/>
            <person name="Argiriou A."/>
            <person name="Vitale D."/>
            <person name="Liguori R."/>
            <person name="Piravandi E."/>
            <person name="Massenet O."/>
            <person name="Quigley F."/>
            <person name="Clabauld G."/>
            <person name="Muendlein A."/>
            <person name="Felber R."/>
            <person name="Schnabl S."/>
            <person name="Hiller R."/>
            <person name="Schmidt W."/>
            <person name="Lecharny A."/>
            <person name="Aubourg S."/>
            <person name="Chefdor F."/>
            <person name="Cooke R."/>
            <person name="Berger C."/>
            <person name="Monfort A."/>
            <person name="Casacuberta E."/>
            <person name="Gibbons T."/>
            <person name="Weber N."/>
            <person name="Vandenbol M."/>
            <person name="Bargues M."/>
            <person name="Terol J."/>
            <person name="Torres A."/>
            <person name="Perez-Perez A."/>
            <person name="Purnelle B."/>
            <person name="Bent E."/>
            <person name="Johnson S."/>
            <person name="Tacon D."/>
            <person name="Jesse T."/>
            <person name="Heijnen L."/>
            <person name="Schwarz S."/>
            <person name="Scholler P."/>
            <person name="Heber S."/>
            <person name="Francs P."/>
            <person name="Bielke C."/>
            <person name="Frishman D."/>
            <person name="Haase D."/>
            <person name="Lemcke K."/>
            <person name="Mewes H.-W."/>
            <person name="Stocker S."/>
            <person name="Zaccaria P."/>
            <person name="Bevan M."/>
            <person name="Wilson R.K."/>
            <person name="de la Bastide M."/>
            <person name="Habermann K."/>
            <person name="Parnell L."/>
            <person name="Dedhia N."/>
            <person name="Gnoj L."/>
            <person name="Schutz K."/>
            <person name="Huang E."/>
            <person name="Spiegel L."/>
            <person name="Sekhon M."/>
            <person name="Murray J."/>
            <person name="Sheet P."/>
            <person name="Cordes M."/>
            <person name="Abu-Threideh J."/>
            <person name="Stoneking T."/>
            <person name="Kalicki J."/>
            <person name="Graves T."/>
            <person name="Harmon G."/>
            <person name="Edwards J."/>
            <person name="Latreille P."/>
            <person name="Courtney L."/>
            <person name="Cloud J."/>
            <person name="Abbott A."/>
            <person name="Scott K."/>
            <person name="Johnson D."/>
            <person name="Minx P."/>
            <person name="Bentley D."/>
            <person name="Fulton B."/>
            <person name="Miller N."/>
            <person name="Greco T."/>
            <person name="Kemp K."/>
            <person name="Kramer J."/>
            <person name="Fulton L."/>
            <person name="Mardis E."/>
            <person name="Dante M."/>
            <person name="Pepin K."/>
            <person name="Hillier L.W."/>
            <person name="Nelson J."/>
            <person name="Spieth J."/>
            <person name="Ryan E."/>
            <person name="Andrews S."/>
            <person name="Geisel C."/>
            <person name="Layman D."/>
            <person name="Du H."/>
            <person name="Ali J."/>
            <person name="Berghoff A."/>
            <person name="Jones K."/>
            <person name="Drone K."/>
            <person name="Cotton M."/>
            <person name="Joshu C."/>
            <person name="Antonoiu B."/>
            <person name="Zidanic M."/>
            <person name="Strong C."/>
            <person name="Sun H."/>
            <person name="Lamar B."/>
            <person name="Yordan C."/>
            <person name="Ma P."/>
            <person name="Zhong J."/>
            <person name="Preston R."/>
            <person name="Vil D."/>
            <person name="Shekher M."/>
            <person name="Matero A."/>
            <person name="Shah R."/>
            <person name="Swaby I.K."/>
            <person name="O'Shaughnessy A."/>
            <person name="Rodriguez M."/>
            <person name="Hoffman J."/>
            <person name="Till S."/>
            <person name="Granat S."/>
            <person name="Shohdy N."/>
            <person name="Hasegawa A."/>
            <person name="Hameed A."/>
            <person name="Lodhi M."/>
            <person name="Johnson A."/>
            <person name="Chen E."/>
            <person name="Marra M.A."/>
            <person name="Martienssen R."/>
            <person name="McCombie W.R."/>
        </authorList>
    </citation>
    <scope>NUCLEOTIDE SEQUENCE [LARGE SCALE GENOMIC DNA]</scope>
    <source>
        <strain>cv. Columbia</strain>
    </source>
</reference>
<reference key="2">
    <citation type="journal article" date="2017" name="Plant J.">
        <title>Araport11: a complete reannotation of the Arabidopsis thaliana reference genome.</title>
        <authorList>
            <person name="Cheng C.Y."/>
            <person name="Krishnakumar V."/>
            <person name="Chan A.P."/>
            <person name="Thibaud-Nissen F."/>
            <person name="Schobel S."/>
            <person name="Town C.D."/>
        </authorList>
    </citation>
    <scope>GENOME REANNOTATION</scope>
    <source>
        <strain>cv. Columbia</strain>
    </source>
</reference>
<reference key="3">
    <citation type="journal article" date="2002" name="Science">
        <title>Functional annotation of a full-length Arabidopsis cDNA collection.</title>
        <authorList>
            <person name="Seki M."/>
            <person name="Narusaka M."/>
            <person name="Kamiya A."/>
            <person name="Ishida J."/>
            <person name="Satou M."/>
            <person name="Sakurai T."/>
            <person name="Nakajima M."/>
            <person name="Enju A."/>
            <person name="Akiyama K."/>
            <person name="Oono Y."/>
            <person name="Muramatsu M."/>
            <person name="Hayashizaki Y."/>
            <person name="Kawai J."/>
            <person name="Carninci P."/>
            <person name="Itoh M."/>
            <person name="Ishii Y."/>
            <person name="Arakawa T."/>
            <person name="Shibata K."/>
            <person name="Shinagawa A."/>
            <person name="Shinozaki K."/>
        </authorList>
    </citation>
    <scope>NUCLEOTIDE SEQUENCE [LARGE SCALE MRNA]</scope>
    <source>
        <strain>cv. Columbia</strain>
    </source>
</reference>
<reference key="4">
    <citation type="journal article" date="2007" name="Plant Cell">
        <title>A conserved carboxylesterase is a SUPPRESSOR OF AVRBST-ELICITED RESISTANCE in Arabidopsis.</title>
        <authorList>
            <person name="Cunnac S."/>
            <person name="Wilson A."/>
            <person name="Nuwer J."/>
            <person name="Kirik A."/>
            <person name="Baranage G."/>
            <person name="Mudgett M.B."/>
        </authorList>
    </citation>
    <scope>NUCLEOTIDE SEQUENCE [MRNA] OF 46-262</scope>
    <source>
        <strain>cv. Columbia</strain>
    </source>
</reference>
<evidence type="ECO:0000250" key="1">
    <source>
        <dbReference type="UniProtKB" id="O75608"/>
    </source>
</evidence>
<evidence type="ECO:0000250" key="2">
    <source>
        <dbReference type="UniProtKB" id="Q84WK4"/>
    </source>
</evidence>
<evidence type="ECO:0000305" key="3"/>
<evidence type="ECO:0000312" key="4">
    <source>
        <dbReference type="Araport" id="AT4G22300"/>
    </source>
</evidence>
<evidence type="ECO:0000312" key="5">
    <source>
        <dbReference type="EMBL" id="AL021712"/>
    </source>
</evidence>
<organism>
    <name type="scientific">Arabidopsis thaliana</name>
    <name type="common">Mouse-ear cress</name>
    <dbReference type="NCBI Taxonomy" id="3702"/>
    <lineage>
        <taxon>Eukaryota</taxon>
        <taxon>Viridiplantae</taxon>
        <taxon>Streptophyta</taxon>
        <taxon>Embryophyta</taxon>
        <taxon>Tracheophyta</taxon>
        <taxon>Spermatophyta</taxon>
        <taxon>Magnoliopsida</taxon>
        <taxon>eudicotyledons</taxon>
        <taxon>Gunneridae</taxon>
        <taxon>Pentapetalae</taxon>
        <taxon>rosids</taxon>
        <taxon>malvids</taxon>
        <taxon>Brassicales</taxon>
        <taxon>Brassicaceae</taxon>
        <taxon>Camelineae</taxon>
        <taxon>Arabidopsis</taxon>
    </lineage>
</organism>
<gene>
    <name evidence="4" type="ordered locus">At4g22300</name>
    <name evidence="5" type="ORF">T10I14_130</name>
</gene>
<comment type="function">
    <text evidence="2">Carboxylesterase.</text>
</comment>
<comment type="similarity">
    <text evidence="3">Belongs to the AB hydrolase superfamily. AB hydrolase 2 family.</text>
</comment>
<proteinExistence type="evidence at transcript level"/>
<dbReference type="EC" id="3.1.1.-" evidence="3"/>
<dbReference type="EMBL" id="AL021712">
    <property type="status" value="NOT_ANNOTATED_CDS"/>
    <property type="molecule type" value="Genomic_DNA"/>
</dbReference>
<dbReference type="EMBL" id="CP002687">
    <property type="protein sequence ID" value="AEE84589.1"/>
    <property type="molecule type" value="Genomic_DNA"/>
</dbReference>
<dbReference type="EMBL" id="AK117563">
    <property type="protein sequence ID" value="BAC42224.1"/>
    <property type="molecule type" value="mRNA"/>
</dbReference>
<dbReference type="EMBL" id="EF100726">
    <property type="protein sequence ID" value="ABO26814.1"/>
    <property type="molecule type" value="mRNA"/>
</dbReference>
<dbReference type="SMR" id="Q8GYK2"/>
<dbReference type="FunCoup" id="Q8GYK2">
    <property type="interactions" value="564"/>
</dbReference>
<dbReference type="STRING" id="3702.Q8GYK2"/>
<dbReference type="ESTHER" id="arath-SOBRL">
    <property type="family name" value="LYsophospholipase_carboxylesterase"/>
</dbReference>
<dbReference type="PaxDb" id="3702-AT4G22300.1"/>
<dbReference type="ProteomicsDB" id="245324"/>
<dbReference type="EnsemblPlants" id="AT4G22300.1">
    <property type="protein sequence ID" value="AT4G22300.1"/>
    <property type="gene ID" value="AT4G22300"/>
</dbReference>
<dbReference type="GeneID" id="828325"/>
<dbReference type="Gramene" id="AT4G22300.1">
    <property type="protein sequence ID" value="AT4G22300.1"/>
    <property type="gene ID" value="AT4G22300"/>
</dbReference>
<dbReference type="KEGG" id="ath:AT4G22300"/>
<dbReference type="Araport" id="AT4G22300"/>
<dbReference type="TAIR" id="AT4G22300">
    <property type="gene designation" value="TIPSY1"/>
</dbReference>
<dbReference type="eggNOG" id="KOG2112">
    <property type="taxonomic scope" value="Eukaryota"/>
</dbReference>
<dbReference type="HOGENOM" id="CLU_049413_1_0_1"/>
<dbReference type="InParanoid" id="Q8GYK2"/>
<dbReference type="OMA" id="WYDILAM"/>
<dbReference type="BioCyc" id="ARA:AT4G22300-MONOMER"/>
<dbReference type="PRO" id="PR:Q8GYK2"/>
<dbReference type="Proteomes" id="UP000006548">
    <property type="component" value="Chromosome 4"/>
</dbReference>
<dbReference type="ExpressionAtlas" id="Q8GYK2">
    <property type="expression patterns" value="baseline and differential"/>
</dbReference>
<dbReference type="GO" id="GO:0005886">
    <property type="term" value="C:plasma membrane"/>
    <property type="evidence" value="ECO:0000314"/>
    <property type="project" value="TAIR"/>
</dbReference>
<dbReference type="GO" id="GO:0016787">
    <property type="term" value="F:hydrolase activity"/>
    <property type="evidence" value="ECO:0007669"/>
    <property type="project" value="UniProtKB-KW"/>
</dbReference>
<dbReference type="GO" id="GO:0006631">
    <property type="term" value="P:fatty acid metabolic process"/>
    <property type="evidence" value="ECO:0007669"/>
    <property type="project" value="UniProtKB-KW"/>
</dbReference>
<dbReference type="FunFam" id="3.40.50.1820:FF:000232">
    <property type="entry name" value="Probable carboxylesterase SOBER1-like"/>
    <property type="match status" value="1"/>
</dbReference>
<dbReference type="Gene3D" id="3.40.50.1820">
    <property type="entry name" value="alpha/beta hydrolase"/>
    <property type="match status" value="1"/>
</dbReference>
<dbReference type="InterPro" id="IPR029058">
    <property type="entry name" value="AB_hydrolase_fold"/>
</dbReference>
<dbReference type="InterPro" id="IPR050565">
    <property type="entry name" value="LYPA1-2/EST-like"/>
</dbReference>
<dbReference type="InterPro" id="IPR003140">
    <property type="entry name" value="PLipase/COase/thioEstase"/>
</dbReference>
<dbReference type="PANTHER" id="PTHR10655:SF17">
    <property type="entry name" value="LYSOPHOSPHOLIPASE-LIKE PROTEIN 1"/>
    <property type="match status" value="1"/>
</dbReference>
<dbReference type="PANTHER" id="PTHR10655">
    <property type="entry name" value="LYSOPHOSPHOLIPASE-RELATED"/>
    <property type="match status" value="1"/>
</dbReference>
<dbReference type="Pfam" id="PF02230">
    <property type="entry name" value="Abhydrolase_2"/>
    <property type="match status" value="1"/>
</dbReference>
<dbReference type="SUPFAM" id="SSF53474">
    <property type="entry name" value="alpha/beta-Hydrolases"/>
    <property type="match status" value="1"/>
</dbReference>
<keyword id="KW-0276">Fatty acid metabolism</keyword>
<keyword id="KW-0378">Hydrolase</keyword>
<keyword id="KW-0443">Lipid metabolism</keyword>
<keyword id="KW-1185">Reference proteome</keyword>
<accession>Q8GYK2</accession>
<accession>A4KWB1</accession>
<feature type="chain" id="PRO_0000433447" description="Probable carboxylesterase SOBER1-like">
    <location>
        <begin position="1"/>
        <end position="262"/>
    </location>
</feature>
<feature type="active site" description="Charge relay system" evidence="1">
    <location>
        <position position="151"/>
    </location>
</feature>
<feature type="active site" description="Charge relay system" evidence="1">
    <location>
        <position position="205"/>
    </location>
</feature>
<feature type="active site" description="Charge relay system" evidence="1">
    <location>
        <position position="237"/>
    </location>
</feature>
<feature type="sequence conflict" description="In Ref. 4; ABO26814." evidence="3" ref="4">
    <original>V</original>
    <variation>F</variation>
    <location>
        <position position="161"/>
    </location>
</feature>
<protein>
    <recommendedName>
        <fullName evidence="3">Probable carboxylesterase SOBER1-like</fullName>
        <ecNumber evidence="3">3.1.1.-</ecNumber>
    </recommendedName>
</protein>
<name>SOBRL_ARATH</name>